<proteinExistence type="inferred from homology"/>
<protein>
    <recommendedName>
        <fullName evidence="1">Ribosomal protein uS12 methylthiotransferase RimO</fullName>
        <shortName evidence="1">uS12 MTTase</shortName>
        <shortName evidence="1">uS12 methylthiotransferase</shortName>
        <ecNumber evidence="1">2.8.4.4</ecNumber>
    </recommendedName>
    <alternativeName>
        <fullName evidence="1">Ribosomal protein uS12 (aspartate-C(3))-methylthiotransferase</fullName>
    </alternativeName>
    <alternativeName>
        <fullName evidence="1">Ribosome maturation factor RimO</fullName>
    </alternativeName>
</protein>
<evidence type="ECO:0000255" key="1">
    <source>
        <dbReference type="HAMAP-Rule" id="MF_01865"/>
    </source>
</evidence>
<evidence type="ECO:0000255" key="2">
    <source>
        <dbReference type="PROSITE-ProRule" id="PRU01266"/>
    </source>
</evidence>
<sequence>MKINFINLGCPKNLVDSENIMGFFKKENISSYHRADTVVINTCGFIEQAKRESIEEILKAIGDGKKVFVTGCLVYRYKEELQKEIPEAVFFENIKDLEGIELLQTPKRQLTTKHYAYLKIAEGCNRKCSFCAIPNIRGHHRSKSIEELVEEAIYLKEKGVKELIIVSQDTLYYQEDNSFKSIIKLLDALEKLDFPWIRLMYLYPNSISKDFIDYIDNSKSVLPYFDIPLQHISDNILKSMRRGYTKKDVFRLLEQINAMKHKKPILRSSFIVGYPTEEERDFEELLDFISQELFHFVGVFEYSHEEGTYAYQFDDKIPKEEKQRRYKEVFNLSQEILEEKNSALVGQEIDILIEKKDRARAFFQAPEIDGIVFLEKSSPKTGIIKKAKVIANIGTDLLVDI</sequence>
<comment type="function">
    <text evidence="1">Catalyzes the methylthiolation of an aspartic acid residue of ribosomal protein uS12.</text>
</comment>
<comment type="catalytic activity">
    <reaction evidence="1">
        <text>L-aspartate(89)-[ribosomal protein uS12]-hydrogen + (sulfur carrier)-SH + AH2 + 2 S-adenosyl-L-methionine = 3-methylsulfanyl-L-aspartate(89)-[ribosomal protein uS12]-hydrogen + (sulfur carrier)-H + 5'-deoxyadenosine + L-methionine + A + S-adenosyl-L-homocysteine + 2 H(+)</text>
        <dbReference type="Rhea" id="RHEA:37087"/>
        <dbReference type="Rhea" id="RHEA-COMP:10460"/>
        <dbReference type="Rhea" id="RHEA-COMP:10461"/>
        <dbReference type="Rhea" id="RHEA-COMP:14737"/>
        <dbReference type="Rhea" id="RHEA-COMP:14739"/>
        <dbReference type="ChEBI" id="CHEBI:13193"/>
        <dbReference type="ChEBI" id="CHEBI:15378"/>
        <dbReference type="ChEBI" id="CHEBI:17319"/>
        <dbReference type="ChEBI" id="CHEBI:17499"/>
        <dbReference type="ChEBI" id="CHEBI:29917"/>
        <dbReference type="ChEBI" id="CHEBI:29961"/>
        <dbReference type="ChEBI" id="CHEBI:57844"/>
        <dbReference type="ChEBI" id="CHEBI:57856"/>
        <dbReference type="ChEBI" id="CHEBI:59789"/>
        <dbReference type="ChEBI" id="CHEBI:64428"/>
        <dbReference type="ChEBI" id="CHEBI:73599"/>
        <dbReference type="EC" id="2.8.4.4"/>
    </reaction>
</comment>
<comment type="cofactor">
    <cofactor evidence="1">
        <name>[4Fe-4S] cluster</name>
        <dbReference type="ChEBI" id="CHEBI:49883"/>
    </cofactor>
    <text evidence="1">Binds 2 [4Fe-4S] clusters. One cluster is coordinated with 3 cysteines and an exchangeable S-adenosyl-L-methionine.</text>
</comment>
<comment type="subcellular location">
    <subcellularLocation>
        <location evidence="1">Cytoplasm</location>
    </subcellularLocation>
</comment>
<comment type="similarity">
    <text evidence="1">Belongs to the methylthiotransferase family. RimO subfamily.</text>
</comment>
<gene>
    <name evidence="1" type="primary">rimO</name>
    <name type="ordered locus">HY04AAS1_0160</name>
</gene>
<name>RIMO_HYDS0</name>
<dbReference type="EC" id="2.8.4.4" evidence="1"/>
<dbReference type="EMBL" id="CP001130">
    <property type="protein sequence ID" value="ACG56852.1"/>
    <property type="molecule type" value="Genomic_DNA"/>
</dbReference>
<dbReference type="RefSeq" id="WP_012513209.1">
    <property type="nucleotide sequence ID" value="NC_011126.1"/>
</dbReference>
<dbReference type="SMR" id="B4U6U1"/>
<dbReference type="STRING" id="380749.HY04AAS1_0160"/>
<dbReference type="KEGG" id="hya:HY04AAS1_0160"/>
<dbReference type="eggNOG" id="COG0621">
    <property type="taxonomic scope" value="Bacteria"/>
</dbReference>
<dbReference type="HOGENOM" id="CLU_018697_0_1_0"/>
<dbReference type="OrthoDB" id="9805215at2"/>
<dbReference type="GO" id="GO:0005829">
    <property type="term" value="C:cytosol"/>
    <property type="evidence" value="ECO:0007669"/>
    <property type="project" value="TreeGrafter"/>
</dbReference>
<dbReference type="GO" id="GO:0051539">
    <property type="term" value="F:4 iron, 4 sulfur cluster binding"/>
    <property type="evidence" value="ECO:0007669"/>
    <property type="project" value="UniProtKB-UniRule"/>
</dbReference>
<dbReference type="GO" id="GO:0035599">
    <property type="term" value="F:aspartic acid methylthiotransferase activity"/>
    <property type="evidence" value="ECO:0007669"/>
    <property type="project" value="TreeGrafter"/>
</dbReference>
<dbReference type="GO" id="GO:0046872">
    <property type="term" value="F:metal ion binding"/>
    <property type="evidence" value="ECO:0007669"/>
    <property type="project" value="UniProtKB-KW"/>
</dbReference>
<dbReference type="GO" id="GO:0103039">
    <property type="term" value="F:protein methylthiotransferase activity"/>
    <property type="evidence" value="ECO:0007669"/>
    <property type="project" value="UniProtKB-EC"/>
</dbReference>
<dbReference type="GO" id="GO:0006400">
    <property type="term" value="P:tRNA modification"/>
    <property type="evidence" value="ECO:0007669"/>
    <property type="project" value="InterPro"/>
</dbReference>
<dbReference type="CDD" id="cd01335">
    <property type="entry name" value="Radical_SAM"/>
    <property type="match status" value="1"/>
</dbReference>
<dbReference type="FunFam" id="3.80.30.20:FF:000001">
    <property type="entry name" value="tRNA-2-methylthio-N(6)-dimethylallyladenosine synthase 2"/>
    <property type="match status" value="1"/>
</dbReference>
<dbReference type="Gene3D" id="3.30.750.200">
    <property type="match status" value="1"/>
</dbReference>
<dbReference type="Gene3D" id="3.30.750.210">
    <property type="match status" value="1"/>
</dbReference>
<dbReference type="Gene3D" id="3.40.50.12160">
    <property type="entry name" value="Methylthiotransferase, N-terminal domain"/>
    <property type="match status" value="1"/>
</dbReference>
<dbReference type="Gene3D" id="2.40.50.140">
    <property type="entry name" value="Nucleic acid-binding proteins"/>
    <property type="match status" value="1"/>
</dbReference>
<dbReference type="HAMAP" id="MF_01865">
    <property type="entry name" value="MTTase_RimO"/>
    <property type="match status" value="1"/>
</dbReference>
<dbReference type="InterPro" id="IPR006638">
    <property type="entry name" value="Elp3/MiaA/NifB-like_rSAM"/>
</dbReference>
<dbReference type="InterPro" id="IPR005839">
    <property type="entry name" value="Methylthiotransferase"/>
</dbReference>
<dbReference type="InterPro" id="IPR020612">
    <property type="entry name" value="Methylthiotransferase_CS"/>
</dbReference>
<dbReference type="InterPro" id="IPR013848">
    <property type="entry name" value="Methylthiotransferase_N"/>
</dbReference>
<dbReference type="InterPro" id="IPR038135">
    <property type="entry name" value="Methylthiotransferase_N_sf"/>
</dbReference>
<dbReference type="InterPro" id="IPR012340">
    <property type="entry name" value="NA-bd_OB-fold"/>
</dbReference>
<dbReference type="InterPro" id="IPR005840">
    <property type="entry name" value="Ribosomal_uS12_MeSTrfase_RimO"/>
</dbReference>
<dbReference type="InterPro" id="IPR007197">
    <property type="entry name" value="rSAM"/>
</dbReference>
<dbReference type="InterPro" id="IPR002792">
    <property type="entry name" value="TRAM_dom"/>
</dbReference>
<dbReference type="NCBIfam" id="TIGR01125">
    <property type="entry name" value="30S ribosomal protein S12 methylthiotransferase RimO"/>
    <property type="match status" value="1"/>
</dbReference>
<dbReference type="NCBIfam" id="TIGR00089">
    <property type="entry name" value="MiaB/RimO family radical SAM methylthiotransferase"/>
    <property type="match status" value="1"/>
</dbReference>
<dbReference type="PANTHER" id="PTHR43837">
    <property type="entry name" value="RIBOSOMAL PROTEIN S12 METHYLTHIOTRANSFERASE RIMO"/>
    <property type="match status" value="1"/>
</dbReference>
<dbReference type="PANTHER" id="PTHR43837:SF1">
    <property type="entry name" value="RIBOSOMAL PROTEIN US12 METHYLTHIOTRANSFERASE RIMO"/>
    <property type="match status" value="1"/>
</dbReference>
<dbReference type="Pfam" id="PF04055">
    <property type="entry name" value="Radical_SAM"/>
    <property type="match status" value="1"/>
</dbReference>
<dbReference type="Pfam" id="PF18693">
    <property type="entry name" value="TRAM_2"/>
    <property type="match status" value="1"/>
</dbReference>
<dbReference type="Pfam" id="PF00919">
    <property type="entry name" value="UPF0004"/>
    <property type="match status" value="1"/>
</dbReference>
<dbReference type="SFLD" id="SFLDG01082">
    <property type="entry name" value="B12-binding_domain_containing"/>
    <property type="match status" value="1"/>
</dbReference>
<dbReference type="SFLD" id="SFLDG01061">
    <property type="entry name" value="methylthiotransferase"/>
    <property type="match status" value="1"/>
</dbReference>
<dbReference type="SFLD" id="SFLDF00274">
    <property type="entry name" value="ribosomal_protein_S12_methylth"/>
    <property type="match status" value="1"/>
</dbReference>
<dbReference type="SMART" id="SM00729">
    <property type="entry name" value="Elp3"/>
    <property type="match status" value="1"/>
</dbReference>
<dbReference type="SUPFAM" id="SSF102114">
    <property type="entry name" value="Radical SAM enzymes"/>
    <property type="match status" value="1"/>
</dbReference>
<dbReference type="PROSITE" id="PS51449">
    <property type="entry name" value="MTTASE_N"/>
    <property type="match status" value="1"/>
</dbReference>
<dbReference type="PROSITE" id="PS01278">
    <property type="entry name" value="MTTASE_RADICAL"/>
    <property type="match status" value="1"/>
</dbReference>
<dbReference type="PROSITE" id="PS51918">
    <property type="entry name" value="RADICAL_SAM"/>
    <property type="match status" value="1"/>
</dbReference>
<feature type="chain" id="PRO_0000374865" description="Ribosomal protein uS12 methylthiotransferase RimO">
    <location>
        <begin position="1"/>
        <end position="401"/>
    </location>
</feature>
<feature type="domain" description="MTTase N-terminal" evidence="1">
    <location>
        <begin position="1"/>
        <end position="108"/>
    </location>
</feature>
<feature type="domain" description="Radical SAM core" evidence="2">
    <location>
        <begin position="110"/>
        <end position="339"/>
    </location>
</feature>
<feature type="binding site" evidence="1">
    <location>
        <position position="10"/>
    </location>
    <ligand>
        <name>[4Fe-4S] cluster</name>
        <dbReference type="ChEBI" id="CHEBI:49883"/>
        <label>1</label>
    </ligand>
</feature>
<feature type="binding site" evidence="1">
    <location>
        <position position="43"/>
    </location>
    <ligand>
        <name>[4Fe-4S] cluster</name>
        <dbReference type="ChEBI" id="CHEBI:49883"/>
        <label>1</label>
    </ligand>
</feature>
<feature type="binding site" evidence="1">
    <location>
        <position position="72"/>
    </location>
    <ligand>
        <name>[4Fe-4S] cluster</name>
        <dbReference type="ChEBI" id="CHEBI:49883"/>
        <label>1</label>
    </ligand>
</feature>
<feature type="binding site" evidence="1">
    <location>
        <position position="124"/>
    </location>
    <ligand>
        <name>[4Fe-4S] cluster</name>
        <dbReference type="ChEBI" id="CHEBI:49883"/>
        <label>2</label>
        <note>4Fe-4S-S-AdoMet</note>
    </ligand>
</feature>
<feature type="binding site" evidence="1">
    <location>
        <position position="128"/>
    </location>
    <ligand>
        <name>[4Fe-4S] cluster</name>
        <dbReference type="ChEBI" id="CHEBI:49883"/>
        <label>2</label>
        <note>4Fe-4S-S-AdoMet</note>
    </ligand>
</feature>
<feature type="binding site" evidence="1">
    <location>
        <position position="131"/>
    </location>
    <ligand>
        <name>[4Fe-4S] cluster</name>
        <dbReference type="ChEBI" id="CHEBI:49883"/>
        <label>2</label>
        <note>4Fe-4S-S-AdoMet</note>
    </ligand>
</feature>
<keyword id="KW-0004">4Fe-4S</keyword>
<keyword id="KW-0963">Cytoplasm</keyword>
<keyword id="KW-0408">Iron</keyword>
<keyword id="KW-0411">Iron-sulfur</keyword>
<keyword id="KW-0479">Metal-binding</keyword>
<keyword id="KW-0949">S-adenosyl-L-methionine</keyword>
<keyword id="KW-0808">Transferase</keyword>
<accession>B4U6U1</accession>
<reference key="1">
    <citation type="journal article" date="2009" name="J. Bacteriol.">
        <title>Complete and draft genome sequences of six members of the Aquificales.</title>
        <authorList>
            <person name="Reysenbach A.-L."/>
            <person name="Hamamura N."/>
            <person name="Podar M."/>
            <person name="Griffiths E."/>
            <person name="Ferreira S."/>
            <person name="Hochstein R."/>
            <person name="Heidelberg J."/>
            <person name="Johnson J."/>
            <person name="Mead D."/>
            <person name="Pohorille A."/>
            <person name="Sarmiento M."/>
            <person name="Schweighofer K."/>
            <person name="Seshadri R."/>
            <person name="Voytek M.A."/>
        </authorList>
    </citation>
    <scope>NUCLEOTIDE SEQUENCE [LARGE SCALE GENOMIC DNA]</scope>
    <source>
        <strain>Y04AAS1</strain>
    </source>
</reference>
<organism>
    <name type="scientific">Hydrogenobaculum sp. (strain Y04AAS1)</name>
    <dbReference type="NCBI Taxonomy" id="380749"/>
    <lineage>
        <taxon>Bacteria</taxon>
        <taxon>Pseudomonadati</taxon>
        <taxon>Aquificota</taxon>
        <taxon>Aquificia</taxon>
        <taxon>Aquificales</taxon>
        <taxon>Aquificaceae</taxon>
        <taxon>Hydrogenobaculum</taxon>
    </lineage>
</organism>